<organism>
    <name type="scientific">Chlorobaculum tepidum (strain ATCC 49652 / DSM 12025 / NBRC 103806 / TLS)</name>
    <name type="common">Chlorobium tepidum</name>
    <dbReference type="NCBI Taxonomy" id="194439"/>
    <lineage>
        <taxon>Bacteria</taxon>
        <taxon>Pseudomonadati</taxon>
        <taxon>Chlorobiota</taxon>
        <taxon>Chlorobiia</taxon>
        <taxon>Chlorobiales</taxon>
        <taxon>Chlorobiaceae</taxon>
        <taxon>Chlorobaculum</taxon>
    </lineage>
</organism>
<sequence>MSSPQHVIIGLSGGVDSAVAACLLIKQGYHVTGLNIRVLDTPEDTPTLAPSAMRISDSEEFDFPVFTLNLSAKFARDVVGYFHDDYLAGRTPNPCMVCNKAIKWFGLFEAMRLLRADLVATGHYARTELRDAVTRLLKGVDPEKDQSYFLWMLTQAELAKTLFPLGGYTKAEVRELARSFGVHAAEKKESQEICFVPHDDYCAYLANAIPGLEARVAGGEIVDQAGKVIGHHRGYPFYTIGQRRGLGVSTGEPVYVTEIDAEHNRIHVGSKADLECRSLIASGMNWIGIATPDKSFEAEARIRYRDRQSACMIEPMDDNRAWVSFREPKQGVACGQAVVFYDGDEVLGGGIIAKVNPEAPPQKILG</sequence>
<proteinExistence type="inferred from homology"/>
<evidence type="ECO:0000255" key="1">
    <source>
        <dbReference type="HAMAP-Rule" id="MF_00144"/>
    </source>
</evidence>
<gene>
    <name evidence="1" type="primary">mnmA</name>
    <name type="ordered locus">CT1855</name>
</gene>
<name>MNMA_CHLTE</name>
<feature type="chain" id="PRO_0000349578" description="tRNA-specific 2-thiouridylase MnmA">
    <location>
        <begin position="1"/>
        <end position="366"/>
    </location>
</feature>
<feature type="region of interest" description="Interaction with tRNA" evidence="1">
    <location>
        <begin position="144"/>
        <end position="146"/>
    </location>
</feature>
<feature type="region of interest" description="Interaction with tRNA" evidence="1">
    <location>
        <begin position="303"/>
        <end position="304"/>
    </location>
</feature>
<feature type="active site" description="Nucleophile" evidence="1">
    <location>
        <position position="98"/>
    </location>
</feature>
<feature type="active site" description="Cysteine persulfide intermediate" evidence="1">
    <location>
        <position position="194"/>
    </location>
</feature>
<feature type="binding site" evidence="1">
    <location>
        <begin position="10"/>
        <end position="17"/>
    </location>
    <ligand>
        <name>ATP</name>
        <dbReference type="ChEBI" id="CHEBI:30616"/>
    </ligand>
</feature>
<feature type="binding site" evidence="1">
    <location>
        <position position="36"/>
    </location>
    <ligand>
        <name>ATP</name>
        <dbReference type="ChEBI" id="CHEBI:30616"/>
    </ligand>
</feature>
<feature type="binding site" evidence="1">
    <location>
        <position position="122"/>
    </location>
    <ligand>
        <name>ATP</name>
        <dbReference type="ChEBI" id="CHEBI:30616"/>
    </ligand>
</feature>
<feature type="site" description="Interaction with tRNA" evidence="1">
    <location>
        <position position="123"/>
    </location>
</feature>
<feature type="site" description="Interaction with tRNA" evidence="1">
    <location>
        <position position="336"/>
    </location>
</feature>
<feature type="disulfide bond" description="Alternate" evidence="1">
    <location>
        <begin position="98"/>
        <end position="194"/>
    </location>
</feature>
<reference key="1">
    <citation type="journal article" date="2002" name="Proc. Natl. Acad. Sci. U.S.A.">
        <title>The complete genome sequence of Chlorobium tepidum TLS, a photosynthetic, anaerobic, green-sulfur bacterium.</title>
        <authorList>
            <person name="Eisen J.A."/>
            <person name="Nelson K.E."/>
            <person name="Paulsen I.T."/>
            <person name="Heidelberg J.F."/>
            <person name="Wu M."/>
            <person name="Dodson R.J."/>
            <person name="DeBoy R.T."/>
            <person name="Gwinn M.L."/>
            <person name="Nelson W.C."/>
            <person name="Haft D.H."/>
            <person name="Hickey E.K."/>
            <person name="Peterson J.D."/>
            <person name="Durkin A.S."/>
            <person name="Kolonay J.F."/>
            <person name="Yang F."/>
            <person name="Holt I.E."/>
            <person name="Umayam L.A."/>
            <person name="Mason T.M."/>
            <person name="Brenner M."/>
            <person name="Shea T.P."/>
            <person name="Parksey D.S."/>
            <person name="Nierman W.C."/>
            <person name="Feldblyum T.V."/>
            <person name="Hansen C.L."/>
            <person name="Craven M.B."/>
            <person name="Radune D."/>
            <person name="Vamathevan J.J."/>
            <person name="Khouri H.M."/>
            <person name="White O."/>
            <person name="Gruber T.M."/>
            <person name="Ketchum K.A."/>
            <person name="Venter J.C."/>
            <person name="Tettelin H."/>
            <person name="Bryant D.A."/>
            <person name="Fraser C.M."/>
        </authorList>
    </citation>
    <scope>NUCLEOTIDE SEQUENCE [LARGE SCALE GENOMIC DNA]</scope>
    <source>
        <strain>ATCC 49652 / DSM 12025 / NBRC 103806 / TLS</strain>
    </source>
</reference>
<comment type="function">
    <text evidence="1">Catalyzes the 2-thiolation of uridine at the wobble position (U34) of tRNA, leading to the formation of s(2)U34.</text>
</comment>
<comment type="catalytic activity">
    <reaction evidence="1">
        <text>S-sulfanyl-L-cysteinyl-[protein] + uridine(34) in tRNA + AH2 + ATP = 2-thiouridine(34) in tRNA + L-cysteinyl-[protein] + A + AMP + diphosphate + H(+)</text>
        <dbReference type="Rhea" id="RHEA:47032"/>
        <dbReference type="Rhea" id="RHEA-COMP:10131"/>
        <dbReference type="Rhea" id="RHEA-COMP:11726"/>
        <dbReference type="Rhea" id="RHEA-COMP:11727"/>
        <dbReference type="Rhea" id="RHEA-COMP:11728"/>
        <dbReference type="ChEBI" id="CHEBI:13193"/>
        <dbReference type="ChEBI" id="CHEBI:15378"/>
        <dbReference type="ChEBI" id="CHEBI:17499"/>
        <dbReference type="ChEBI" id="CHEBI:29950"/>
        <dbReference type="ChEBI" id="CHEBI:30616"/>
        <dbReference type="ChEBI" id="CHEBI:33019"/>
        <dbReference type="ChEBI" id="CHEBI:61963"/>
        <dbReference type="ChEBI" id="CHEBI:65315"/>
        <dbReference type="ChEBI" id="CHEBI:87170"/>
        <dbReference type="ChEBI" id="CHEBI:456215"/>
        <dbReference type="EC" id="2.8.1.13"/>
    </reaction>
</comment>
<comment type="subcellular location">
    <subcellularLocation>
        <location evidence="1">Cytoplasm</location>
    </subcellularLocation>
</comment>
<comment type="similarity">
    <text evidence="1">Belongs to the MnmA/TRMU family.</text>
</comment>
<keyword id="KW-0067">ATP-binding</keyword>
<keyword id="KW-0963">Cytoplasm</keyword>
<keyword id="KW-1015">Disulfide bond</keyword>
<keyword id="KW-0547">Nucleotide-binding</keyword>
<keyword id="KW-1185">Reference proteome</keyword>
<keyword id="KW-0694">RNA-binding</keyword>
<keyword id="KW-0808">Transferase</keyword>
<keyword id="KW-0819">tRNA processing</keyword>
<keyword id="KW-0820">tRNA-binding</keyword>
<accession>Q8KBD3</accession>
<protein>
    <recommendedName>
        <fullName evidence="1">tRNA-specific 2-thiouridylase MnmA</fullName>
        <ecNumber evidence="1">2.8.1.13</ecNumber>
    </recommendedName>
</protein>
<dbReference type="EC" id="2.8.1.13" evidence="1"/>
<dbReference type="EMBL" id="AE006470">
    <property type="protein sequence ID" value="AAM73075.1"/>
    <property type="molecule type" value="Genomic_DNA"/>
</dbReference>
<dbReference type="RefSeq" id="NP_662733.1">
    <property type="nucleotide sequence ID" value="NC_002932.3"/>
</dbReference>
<dbReference type="RefSeq" id="WP_010933514.1">
    <property type="nucleotide sequence ID" value="NC_002932.3"/>
</dbReference>
<dbReference type="SMR" id="Q8KBD3"/>
<dbReference type="STRING" id="194439.CT1855"/>
<dbReference type="EnsemblBacteria" id="AAM73075">
    <property type="protein sequence ID" value="AAM73075"/>
    <property type="gene ID" value="CT1855"/>
</dbReference>
<dbReference type="KEGG" id="cte:CT1855"/>
<dbReference type="PATRIC" id="fig|194439.7.peg.1684"/>
<dbReference type="eggNOG" id="COG0482">
    <property type="taxonomic scope" value="Bacteria"/>
</dbReference>
<dbReference type="HOGENOM" id="CLU_035188_0_0_10"/>
<dbReference type="OrthoDB" id="9800696at2"/>
<dbReference type="Proteomes" id="UP000001007">
    <property type="component" value="Chromosome"/>
</dbReference>
<dbReference type="GO" id="GO:0005737">
    <property type="term" value="C:cytoplasm"/>
    <property type="evidence" value="ECO:0007669"/>
    <property type="project" value="UniProtKB-SubCell"/>
</dbReference>
<dbReference type="GO" id="GO:0005524">
    <property type="term" value="F:ATP binding"/>
    <property type="evidence" value="ECO:0007669"/>
    <property type="project" value="UniProtKB-KW"/>
</dbReference>
<dbReference type="GO" id="GO:0000049">
    <property type="term" value="F:tRNA binding"/>
    <property type="evidence" value="ECO:0007669"/>
    <property type="project" value="UniProtKB-KW"/>
</dbReference>
<dbReference type="GO" id="GO:0103016">
    <property type="term" value="F:tRNA-uridine 2-sulfurtransferase activity"/>
    <property type="evidence" value="ECO:0007669"/>
    <property type="project" value="UniProtKB-EC"/>
</dbReference>
<dbReference type="GO" id="GO:0002143">
    <property type="term" value="P:tRNA wobble position uridine thiolation"/>
    <property type="evidence" value="ECO:0007669"/>
    <property type="project" value="TreeGrafter"/>
</dbReference>
<dbReference type="CDD" id="cd01998">
    <property type="entry name" value="MnmA_TRMU-like"/>
    <property type="match status" value="1"/>
</dbReference>
<dbReference type="FunFam" id="2.30.30.280:FF:000001">
    <property type="entry name" value="tRNA-specific 2-thiouridylase MnmA"/>
    <property type="match status" value="1"/>
</dbReference>
<dbReference type="FunFam" id="2.40.30.10:FF:000023">
    <property type="entry name" value="tRNA-specific 2-thiouridylase MnmA"/>
    <property type="match status" value="1"/>
</dbReference>
<dbReference type="Gene3D" id="2.30.30.280">
    <property type="entry name" value="Adenine nucleotide alpha hydrolases-like domains"/>
    <property type="match status" value="1"/>
</dbReference>
<dbReference type="Gene3D" id="3.40.50.620">
    <property type="entry name" value="HUPs"/>
    <property type="match status" value="1"/>
</dbReference>
<dbReference type="Gene3D" id="2.40.30.10">
    <property type="entry name" value="Translation factors"/>
    <property type="match status" value="1"/>
</dbReference>
<dbReference type="HAMAP" id="MF_00144">
    <property type="entry name" value="tRNA_thiouridyl_MnmA"/>
    <property type="match status" value="1"/>
</dbReference>
<dbReference type="InterPro" id="IPR004506">
    <property type="entry name" value="MnmA-like"/>
</dbReference>
<dbReference type="InterPro" id="IPR046885">
    <property type="entry name" value="MnmA-like_C"/>
</dbReference>
<dbReference type="InterPro" id="IPR046884">
    <property type="entry name" value="MnmA-like_central"/>
</dbReference>
<dbReference type="InterPro" id="IPR023382">
    <property type="entry name" value="MnmA-like_central_sf"/>
</dbReference>
<dbReference type="InterPro" id="IPR014729">
    <property type="entry name" value="Rossmann-like_a/b/a_fold"/>
</dbReference>
<dbReference type="NCBIfam" id="NF001138">
    <property type="entry name" value="PRK00143.1"/>
    <property type="match status" value="1"/>
</dbReference>
<dbReference type="NCBIfam" id="TIGR00420">
    <property type="entry name" value="trmU"/>
    <property type="match status" value="1"/>
</dbReference>
<dbReference type="PANTHER" id="PTHR11933:SF5">
    <property type="entry name" value="MITOCHONDRIAL TRNA-SPECIFIC 2-THIOURIDYLASE 1"/>
    <property type="match status" value="1"/>
</dbReference>
<dbReference type="PANTHER" id="PTHR11933">
    <property type="entry name" value="TRNA 5-METHYLAMINOMETHYL-2-THIOURIDYLATE -METHYLTRANSFERASE"/>
    <property type="match status" value="1"/>
</dbReference>
<dbReference type="Pfam" id="PF03054">
    <property type="entry name" value="tRNA_Me_trans"/>
    <property type="match status" value="1"/>
</dbReference>
<dbReference type="Pfam" id="PF20258">
    <property type="entry name" value="tRNA_Me_trans_C"/>
    <property type="match status" value="1"/>
</dbReference>
<dbReference type="Pfam" id="PF20259">
    <property type="entry name" value="tRNA_Me_trans_M"/>
    <property type="match status" value="1"/>
</dbReference>
<dbReference type="SUPFAM" id="SSF52402">
    <property type="entry name" value="Adenine nucleotide alpha hydrolases-like"/>
    <property type="match status" value="1"/>
</dbReference>